<proteinExistence type="inferred from homology"/>
<evidence type="ECO:0000255" key="1">
    <source>
        <dbReference type="HAMAP-Rule" id="MF_01216"/>
    </source>
</evidence>
<name>AZOR_ECOL5</name>
<protein>
    <recommendedName>
        <fullName evidence="1">FMN-dependent NADH:quinone oxidoreductase</fullName>
        <ecNumber evidence="1">1.6.5.-</ecNumber>
    </recommendedName>
    <alternativeName>
        <fullName evidence="1">Azo-dye reductase</fullName>
    </alternativeName>
    <alternativeName>
        <fullName evidence="1">FMN-dependent NADH-azo compound oxidoreductase</fullName>
    </alternativeName>
    <alternativeName>
        <fullName evidence="1">FMN-dependent NADH-azoreductase</fullName>
        <ecNumber evidence="1">1.7.1.17</ecNumber>
    </alternativeName>
</protein>
<comment type="function">
    <text evidence="1">Quinone reductase that provides resistance to thiol-specific stress caused by electrophilic quinones.</text>
</comment>
<comment type="function">
    <text evidence="1">Also exhibits azoreductase activity. Catalyzes the reductive cleavage of the azo bond in aromatic azo compounds to the corresponding amines.</text>
</comment>
<comment type="catalytic activity">
    <reaction evidence="1">
        <text>2 a quinone + NADH + H(+) = 2 a 1,4-benzosemiquinone + NAD(+)</text>
        <dbReference type="Rhea" id="RHEA:65952"/>
        <dbReference type="ChEBI" id="CHEBI:15378"/>
        <dbReference type="ChEBI" id="CHEBI:57540"/>
        <dbReference type="ChEBI" id="CHEBI:57945"/>
        <dbReference type="ChEBI" id="CHEBI:132124"/>
        <dbReference type="ChEBI" id="CHEBI:134225"/>
    </reaction>
</comment>
<comment type="catalytic activity">
    <reaction evidence="1">
        <text>N,N-dimethyl-1,4-phenylenediamine + anthranilate + 2 NAD(+) = 2-(4-dimethylaminophenyl)diazenylbenzoate + 2 NADH + 2 H(+)</text>
        <dbReference type="Rhea" id="RHEA:55872"/>
        <dbReference type="ChEBI" id="CHEBI:15378"/>
        <dbReference type="ChEBI" id="CHEBI:15783"/>
        <dbReference type="ChEBI" id="CHEBI:16567"/>
        <dbReference type="ChEBI" id="CHEBI:57540"/>
        <dbReference type="ChEBI" id="CHEBI:57945"/>
        <dbReference type="ChEBI" id="CHEBI:71579"/>
        <dbReference type="EC" id="1.7.1.17"/>
    </reaction>
</comment>
<comment type="cofactor">
    <cofactor evidence="1">
        <name>FMN</name>
        <dbReference type="ChEBI" id="CHEBI:58210"/>
    </cofactor>
    <text evidence="1">Binds 1 FMN per subunit.</text>
</comment>
<comment type="subunit">
    <text evidence="1">Homodimer.</text>
</comment>
<comment type="similarity">
    <text evidence="1">Belongs to the azoreductase type 1 family.</text>
</comment>
<organism>
    <name type="scientific">Escherichia coli O6:K15:H31 (strain 536 / UPEC)</name>
    <dbReference type="NCBI Taxonomy" id="362663"/>
    <lineage>
        <taxon>Bacteria</taxon>
        <taxon>Pseudomonadati</taxon>
        <taxon>Pseudomonadota</taxon>
        <taxon>Gammaproteobacteria</taxon>
        <taxon>Enterobacterales</taxon>
        <taxon>Enterobacteriaceae</taxon>
        <taxon>Escherichia</taxon>
    </lineage>
</organism>
<accession>Q0TI03</accession>
<reference key="1">
    <citation type="journal article" date="2006" name="Mol. Microbiol.">
        <title>Role of pathogenicity island-associated integrases in the genome plasticity of uropathogenic Escherichia coli strain 536.</title>
        <authorList>
            <person name="Hochhut B."/>
            <person name="Wilde C."/>
            <person name="Balling G."/>
            <person name="Middendorf B."/>
            <person name="Dobrindt U."/>
            <person name="Brzuszkiewicz E."/>
            <person name="Gottschalk G."/>
            <person name="Carniel E."/>
            <person name="Hacker J."/>
        </authorList>
    </citation>
    <scope>NUCLEOTIDE SEQUENCE [LARGE SCALE GENOMIC DNA]</scope>
    <source>
        <strain>536 / UPEC</strain>
    </source>
</reference>
<sequence>MSKVLVLKSSILAGYSQSNQLSDYFVEQWREKHSADEITVRDLAANPIPVLDGELVGALRPSDAPLTPRQQEALALSDELIAELKAHDVIVIAAPMYNFNISTQLKNYFDLVARAGVTFRYTEKGPEGLVTGKKAIVITSRGGIHKDGPTDLVTPYLSTFLGFIGITDVKFVFAEGIAYGPEMAAKAQSDAKAAIDSIVAE</sequence>
<feature type="chain" id="PRO_1000066505" description="FMN-dependent NADH:quinone oxidoreductase">
    <location>
        <begin position="1"/>
        <end position="201"/>
    </location>
</feature>
<feature type="binding site" evidence="1">
    <location>
        <position position="10"/>
    </location>
    <ligand>
        <name>FMN</name>
        <dbReference type="ChEBI" id="CHEBI:58210"/>
    </ligand>
</feature>
<feature type="binding site" evidence="1">
    <location>
        <begin position="16"/>
        <end position="18"/>
    </location>
    <ligand>
        <name>FMN</name>
        <dbReference type="ChEBI" id="CHEBI:58210"/>
    </ligand>
</feature>
<feature type="binding site" evidence="1">
    <location>
        <begin position="96"/>
        <end position="99"/>
    </location>
    <ligand>
        <name>FMN</name>
        <dbReference type="ChEBI" id="CHEBI:58210"/>
    </ligand>
</feature>
<feature type="binding site" evidence="1">
    <location>
        <begin position="140"/>
        <end position="143"/>
    </location>
    <ligand>
        <name>FMN</name>
        <dbReference type="ChEBI" id="CHEBI:58210"/>
    </ligand>
</feature>
<gene>
    <name evidence="1" type="primary">azoR</name>
    <name type="ordered locus">ECP_1417</name>
</gene>
<dbReference type="EC" id="1.6.5.-" evidence="1"/>
<dbReference type="EC" id="1.7.1.17" evidence="1"/>
<dbReference type="EMBL" id="CP000247">
    <property type="protein sequence ID" value="ABG69426.1"/>
    <property type="molecule type" value="Genomic_DNA"/>
</dbReference>
<dbReference type="RefSeq" id="WP_000048941.1">
    <property type="nucleotide sequence ID" value="NC_008253.1"/>
</dbReference>
<dbReference type="SMR" id="Q0TI03"/>
<dbReference type="KEGG" id="ecp:ECP_1417"/>
<dbReference type="HOGENOM" id="CLU_088964_0_0_6"/>
<dbReference type="Proteomes" id="UP000009182">
    <property type="component" value="Chromosome"/>
</dbReference>
<dbReference type="GO" id="GO:0009055">
    <property type="term" value="F:electron transfer activity"/>
    <property type="evidence" value="ECO:0007669"/>
    <property type="project" value="UniProtKB-UniRule"/>
</dbReference>
<dbReference type="GO" id="GO:0010181">
    <property type="term" value="F:FMN binding"/>
    <property type="evidence" value="ECO:0007669"/>
    <property type="project" value="UniProtKB-UniRule"/>
</dbReference>
<dbReference type="GO" id="GO:0016652">
    <property type="term" value="F:oxidoreductase activity, acting on NAD(P)H as acceptor"/>
    <property type="evidence" value="ECO:0007669"/>
    <property type="project" value="UniProtKB-UniRule"/>
</dbReference>
<dbReference type="GO" id="GO:0016655">
    <property type="term" value="F:oxidoreductase activity, acting on NAD(P)H, quinone or similar compound as acceptor"/>
    <property type="evidence" value="ECO:0007669"/>
    <property type="project" value="InterPro"/>
</dbReference>
<dbReference type="FunFam" id="3.40.50.360:FF:000010">
    <property type="entry name" value="FMN-dependent NADH-azoreductase"/>
    <property type="match status" value="1"/>
</dbReference>
<dbReference type="Gene3D" id="3.40.50.360">
    <property type="match status" value="1"/>
</dbReference>
<dbReference type="HAMAP" id="MF_01216">
    <property type="entry name" value="Azoreductase_type1"/>
    <property type="match status" value="1"/>
</dbReference>
<dbReference type="InterPro" id="IPR003680">
    <property type="entry name" value="Flavodoxin_fold"/>
</dbReference>
<dbReference type="InterPro" id="IPR029039">
    <property type="entry name" value="Flavoprotein-like_sf"/>
</dbReference>
<dbReference type="InterPro" id="IPR050104">
    <property type="entry name" value="FMN-dep_NADH:Q_OxRdtase_AzoR1"/>
</dbReference>
<dbReference type="InterPro" id="IPR023048">
    <property type="entry name" value="NADH:quinone_OxRdtase_FMN_depd"/>
</dbReference>
<dbReference type="PANTHER" id="PTHR43741">
    <property type="entry name" value="FMN-DEPENDENT NADH-AZOREDUCTASE 1"/>
    <property type="match status" value="1"/>
</dbReference>
<dbReference type="PANTHER" id="PTHR43741:SF2">
    <property type="entry name" value="FMN-DEPENDENT NADH:QUINONE OXIDOREDUCTASE"/>
    <property type="match status" value="1"/>
</dbReference>
<dbReference type="Pfam" id="PF02525">
    <property type="entry name" value="Flavodoxin_2"/>
    <property type="match status" value="1"/>
</dbReference>
<dbReference type="SUPFAM" id="SSF52218">
    <property type="entry name" value="Flavoproteins"/>
    <property type="match status" value="1"/>
</dbReference>
<keyword id="KW-0285">Flavoprotein</keyword>
<keyword id="KW-0288">FMN</keyword>
<keyword id="KW-0520">NAD</keyword>
<keyword id="KW-0560">Oxidoreductase</keyword>